<feature type="chain" id="PRO_0000282674" description="Transcription-repair-coupling factor">
    <location>
        <begin position="1"/>
        <end position="1168"/>
    </location>
</feature>
<feature type="domain" description="Helicase ATP-binding" evidence="1">
    <location>
        <begin position="633"/>
        <end position="794"/>
    </location>
</feature>
<feature type="domain" description="Helicase C-terminal" evidence="1">
    <location>
        <begin position="808"/>
        <end position="969"/>
    </location>
</feature>
<feature type="short sequence motif" description="DEEQ box">
    <location>
        <begin position="747"/>
        <end position="750"/>
    </location>
</feature>
<feature type="binding site" evidence="1">
    <location>
        <begin position="646"/>
        <end position="653"/>
    </location>
    <ligand>
        <name>ATP</name>
        <dbReference type="ChEBI" id="CHEBI:30616"/>
    </ligand>
</feature>
<gene>
    <name evidence="1" type="primary">mfd</name>
    <name type="ordered locus">SAOUHSC_00477</name>
</gene>
<dbReference type="EC" id="3.6.4.-" evidence="1"/>
<dbReference type="EMBL" id="CP000253">
    <property type="protein sequence ID" value="ABD29631.1"/>
    <property type="molecule type" value="Genomic_DNA"/>
</dbReference>
<dbReference type="RefSeq" id="WP_000154228.1">
    <property type="nucleotide sequence ID" value="NZ_LS483365.1"/>
</dbReference>
<dbReference type="RefSeq" id="YP_499055.1">
    <property type="nucleotide sequence ID" value="NC_007795.1"/>
</dbReference>
<dbReference type="SMR" id="Q2G0R8"/>
<dbReference type="STRING" id="93061.SAOUHSC_00477"/>
<dbReference type="PaxDb" id="1280-SAXN108_0555"/>
<dbReference type="GeneID" id="3920336"/>
<dbReference type="KEGG" id="sao:SAOUHSC_00477"/>
<dbReference type="PATRIC" id="fig|93061.5.peg.430"/>
<dbReference type="eggNOG" id="COG1197">
    <property type="taxonomic scope" value="Bacteria"/>
</dbReference>
<dbReference type="HOGENOM" id="CLU_005122_1_3_9"/>
<dbReference type="OrthoDB" id="9804325at2"/>
<dbReference type="PRO" id="PR:Q2G0R8"/>
<dbReference type="Proteomes" id="UP000008816">
    <property type="component" value="Chromosome"/>
</dbReference>
<dbReference type="GO" id="GO:0005737">
    <property type="term" value="C:cytoplasm"/>
    <property type="evidence" value="ECO:0007669"/>
    <property type="project" value="UniProtKB-SubCell"/>
</dbReference>
<dbReference type="GO" id="GO:0005524">
    <property type="term" value="F:ATP binding"/>
    <property type="evidence" value="ECO:0007669"/>
    <property type="project" value="UniProtKB-UniRule"/>
</dbReference>
<dbReference type="GO" id="GO:0003684">
    <property type="term" value="F:damaged DNA binding"/>
    <property type="evidence" value="ECO:0007669"/>
    <property type="project" value="InterPro"/>
</dbReference>
<dbReference type="GO" id="GO:0003677">
    <property type="term" value="F:DNA binding"/>
    <property type="evidence" value="ECO:0000318"/>
    <property type="project" value="GO_Central"/>
</dbReference>
<dbReference type="GO" id="GO:0015616">
    <property type="term" value="F:DNA translocase activity"/>
    <property type="evidence" value="ECO:0000318"/>
    <property type="project" value="GO_Central"/>
</dbReference>
<dbReference type="GO" id="GO:0004386">
    <property type="term" value="F:helicase activity"/>
    <property type="evidence" value="ECO:0007669"/>
    <property type="project" value="UniProtKB-KW"/>
</dbReference>
<dbReference type="GO" id="GO:0016787">
    <property type="term" value="F:hydrolase activity"/>
    <property type="evidence" value="ECO:0007669"/>
    <property type="project" value="UniProtKB-KW"/>
</dbReference>
<dbReference type="GO" id="GO:0043175">
    <property type="term" value="F:RNA polymerase core enzyme binding"/>
    <property type="evidence" value="ECO:0000318"/>
    <property type="project" value="GO_Central"/>
</dbReference>
<dbReference type="GO" id="GO:0006355">
    <property type="term" value="P:regulation of DNA-templated transcription"/>
    <property type="evidence" value="ECO:0000318"/>
    <property type="project" value="GO_Central"/>
</dbReference>
<dbReference type="GO" id="GO:0000716">
    <property type="term" value="P:transcription-coupled nucleotide-excision repair, DNA damage recognition"/>
    <property type="evidence" value="ECO:0000318"/>
    <property type="project" value="GO_Central"/>
</dbReference>
<dbReference type="CDD" id="cd17991">
    <property type="entry name" value="DEXHc_TRCF"/>
    <property type="match status" value="1"/>
</dbReference>
<dbReference type="FunFam" id="3.40.50.300:FF:000546">
    <property type="entry name" value="Transcription-repair-coupling factor"/>
    <property type="match status" value="1"/>
</dbReference>
<dbReference type="Gene3D" id="2.40.10.170">
    <property type="match status" value="1"/>
</dbReference>
<dbReference type="Gene3D" id="3.40.50.11140">
    <property type="match status" value="1"/>
</dbReference>
<dbReference type="Gene3D" id="3.40.50.11180">
    <property type="match status" value="1"/>
</dbReference>
<dbReference type="Gene3D" id="3.40.50.300">
    <property type="entry name" value="P-loop containing nucleotide triphosphate hydrolases"/>
    <property type="match status" value="2"/>
</dbReference>
<dbReference type="Gene3D" id="3.30.2060.10">
    <property type="entry name" value="Penicillin-binding protein 1b domain"/>
    <property type="match status" value="1"/>
</dbReference>
<dbReference type="Gene3D" id="3.90.1150.50">
    <property type="entry name" value="Transcription-repair-coupling factor, D7 domain"/>
    <property type="match status" value="1"/>
</dbReference>
<dbReference type="HAMAP" id="MF_00969">
    <property type="entry name" value="TRCF"/>
    <property type="match status" value="1"/>
</dbReference>
<dbReference type="InterPro" id="IPR003711">
    <property type="entry name" value="CarD-like/TRCF_RID"/>
</dbReference>
<dbReference type="InterPro" id="IPR036101">
    <property type="entry name" value="CarD-like/TRCF_RID_sf"/>
</dbReference>
<dbReference type="InterPro" id="IPR011545">
    <property type="entry name" value="DEAD/DEAH_box_helicase_dom"/>
</dbReference>
<dbReference type="InterPro" id="IPR014001">
    <property type="entry name" value="Helicase_ATP-bd"/>
</dbReference>
<dbReference type="InterPro" id="IPR001650">
    <property type="entry name" value="Helicase_C-like"/>
</dbReference>
<dbReference type="InterPro" id="IPR004576">
    <property type="entry name" value="Mfd"/>
</dbReference>
<dbReference type="InterPro" id="IPR048635">
    <property type="entry name" value="MFD_D3"/>
</dbReference>
<dbReference type="InterPro" id="IPR027417">
    <property type="entry name" value="P-loop_NTPase"/>
</dbReference>
<dbReference type="InterPro" id="IPR047112">
    <property type="entry name" value="RecG/Mfd"/>
</dbReference>
<dbReference type="InterPro" id="IPR037235">
    <property type="entry name" value="TRCF-like_C_D7"/>
</dbReference>
<dbReference type="InterPro" id="IPR005118">
    <property type="entry name" value="TRCF_C"/>
</dbReference>
<dbReference type="InterPro" id="IPR041471">
    <property type="entry name" value="UvrB_inter"/>
</dbReference>
<dbReference type="NCBIfam" id="TIGR00580">
    <property type="entry name" value="mfd"/>
    <property type="match status" value="1"/>
</dbReference>
<dbReference type="PANTHER" id="PTHR47964">
    <property type="entry name" value="ATP-DEPENDENT DNA HELICASE HOMOLOG RECG, CHLOROPLASTIC"/>
    <property type="match status" value="1"/>
</dbReference>
<dbReference type="PANTHER" id="PTHR47964:SF1">
    <property type="entry name" value="ATP-DEPENDENT DNA HELICASE HOMOLOG RECG, CHLOROPLASTIC"/>
    <property type="match status" value="1"/>
</dbReference>
<dbReference type="Pfam" id="PF02559">
    <property type="entry name" value="CarD_TRCF_RID"/>
    <property type="match status" value="1"/>
</dbReference>
<dbReference type="Pfam" id="PF00270">
    <property type="entry name" value="DEAD"/>
    <property type="match status" value="1"/>
</dbReference>
<dbReference type="Pfam" id="PF00271">
    <property type="entry name" value="Helicase_C"/>
    <property type="match status" value="1"/>
</dbReference>
<dbReference type="Pfam" id="PF21132">
    <property type="entry name" value="MFD_D3"/>
    <property type="match status" value="1"/>
</dbReference>
<dbReference type="Pfam" id="PF03461">
    <property type="entry name" value="TRCF"/>
    <property type="match status" value="1"/>
</dbReference>
<dbReference type="Pfam" id="PF17757">
    <property type="entry name" value="UvrB_inter"/>
    <property type="match status" value="1"/>
</dbReference>
<dbReference type="SMART" id="SM01058">
    <property type="entry name" value="CarD_TRCF"/>
    <property type="match status" value="1"/>
</dbReference>
<dbReference type="SMART" id="SM00487">
    <property type="entry name" value="DEXDc"/>
    <property type="match status" value="1"/>
</dbReference>
<dbReference type="SMART" id="SM00490">
    <property type="entry name" value="HELICc"/>
    <property type="match status" value="1"/>
</dbReference>
<dbReference type="SMART" id="SM00982">
    <property type="entry name" value="TRCF"/>
    <property type="match status" value="1"/>
</dbReference>
<dbReference type="SUPFAM" id="SSF141259">
    <property type="entry name" value="CarD-like"/>
    <property type="match status" value="1"/>
</dbReference>
<dbReference type="SUPFAM" id="SSF52540">
    <property type="entry name" value="P-loop containing nucleoside triphosphate hydrolases"/>
    <property type="match status" value="4"/>
</dbReference>
<dbReference type="SUPFAM" id="SSF143517">
    <property type="entry name" value="TRCF domain-like"/>
    <property type="match status" value="1"/>
</dbReference>
<dbReference type="PROSITE" id="PS51192">
    <property type="entry name" value="HELICASE_ATP_BIND_1"/>
    <property type="match status" value="1"/>
</dbReference>
<dbReference type="PROSITE" id="PS51194">
    <property type="entry name" value="HELICASE_CTER"/>
    <property type="match status" value="1"/>
</dbReference>
<name>MFD_STAA8</name>
<reference key="1">
    <citation type="book" date="2006" name="Gram positive pathogens, 2nd edition">
        <title>The Staphylococcus aureus NCTC 8325 genome.</title>
        <editorList>
            <person name="Fischetti V."/>
            <person name="Novick R."/>
            <person name="Ferretti J."/>
            <person name="Portnoy D."/>
            <person name="Rood J."/>
        </editorList>
        <authorList>
            <person name="Gillaspy A.F."/>
            <person name="Worrell V."/>
            <person name="Orvis J."/>
            <person name="Roe B.A."/>
            <person name="Dyer D.W."/>
            <person name="Iandolo J.J."/>
        </authorList>
    </citation>
    <scope>NUCLEOTIDE SEQUENCE [LARGE SCALE GENOMIC DNA]</scope>
    <source>
        <strain>NCTC 8325 / PS 47</strain>
    </source>
</reference>
<accession>Q2G0R8</accession>
<keyword id="KW-0067">ATP-binding</keyword>
<keyword id="KW-0963">Cytoplasm</keyword>
<keyword id="KW-0227">DNA damage</keyword>
<keyword id="KW-0234">DNA repair</keyword>
<keyword id="KW-0238">DNA-binding</keyword>
<keyword id="KW-0347">Helicase</keyword>
<keyword id="KW-0378">Hydrolase</keyword>
<keyword id="KW-0547">Nucleotide-binding</keyword>
<keyword id="KW-1185">Reference proteome</keyword>
<sequence>MTILTTLIKEDNHFQDLNQVFGQANTLVTGLSPSAKVTMIAEKYAQSNQQLLLITNNLYQADKLETDLLQFIDAEELYKYPVQDIMTEEFSTQSPQLMSERIRTLTALAQGKKGLFIVPLNGLKKWLTPVEMWQNHQMTLRVGEDIDVDQFLNKLVNMGYKRESVVSHIGEFSLRGGIIDIFPLIGEPIRIELFDTEIDSIRDFDVETQRSKDNVEEVDITTASDYIITEEVISHLKEELKTAYENTRPKIDKSVRNDLKETYESFKLFESTYFDHQILRRLVAFMYETPSTIIEYFQKDAIIAVDEFNRIKETEESLTVESDSFISNIIESGNGFIGQSFIKYDDFETLIEGYPVTYFSLFATTMPIKLNHIIKFSCKPVQQFYGQYDIMRSEFQRYVNQNYHIVVLVETETKVERMQAMLSEMHIPSITKLHRSMSSGQAVIIEGSLSEGFELPDMGLVVITERELFKSKQKKQRKRTKAISNAEKIKSYQDLNVGDYIVHVHHGVGRYLGVETLEVGQTHRDYIKLQYKGTDQLFVPVDQMDQVQKYVASEDKTPKLNKLGGSEWKKTKAKVQQSVEDIAEELIDLYKEREMAEGYQYGEDTAEQTTFELDFPYELTPDQAKSIDEIKDDMQKSRPMDRLLCGDVGYGKTEVAVRAAFKAVMEGKQVAFLVPTTILAQQHYETLIERMQDFPVEIQLMSRFRTPKEIKQTKEGLKTGFVDIVVGTHKLLSKDIQYKDLGLLIVDEEQRFGVRHKERIKTLKHNVDVLTLTATPIPRTLHMSMLGVRDLSVIETPPENRFPVQTYVLEQNMSFIKEALERELSRDGQVFYLYNKVQSIYEKREQLQMLMPDANIAVAHGQMTERDLEETMLSFINNEYDILVTTTIIETGVDVPNANTLIIEDADRFGLSQLYQLRGRVGRSSRIGYAYFLHPANKVLTETAEDRLQAIKEFTELGSGFKIAMRDLNIRGAGNLLGKQQHGFIDTVGFDLYSQMLEEAVNEKRGIKEPESEVPEVEVDLNLDAYLPTEYIANEQAKIEIYKKLRKTETFDQIIDIKDELIDRFNDYPVEVARLLDIVEIKVHALHSGITLIKDKGKIIDIHLSVKATENIDGEVLFKATQPLGRTMKVGVQNNAMTITLTKQNQWLDSLKFLVKCIEESMRISDEA</sequence>
<evidence type="ECO:0000255" key="1">
    <source>
        <dbReference type="HAMAP-Rule" id="MF_00969"/>
    </source>
</evidence>
<organism>
    <name type="scientific">Staphylococcus aureus (strain NCTC 8325 / PS 47)</name>
    <dbReference type="NCBI Taxonomy" id="93061"/>
    <lineage>
        <taxon>Bacteria</taxon>
        <taxon>Bacillati</taxon>
        <taxon>Bacillota</taxon>
        <taxon>Bacilli</taxon>
        <taxon>Bacillales</taxon>
        <taxon>Staphylococcaceae</taxon>
        <taxon>Staphylococcus</taxon>
    </lineage>
</organism>
<protein>
    <recommendedName>
        <fullName evidence="1">Transcription-repair-coupling factor</fullName>
        <shortName evidence="1">TRCF</shortName>
        <ecNumber evidence="1">3.6.4.-</ecNumber>
    </recommendedName>
</protein>
<comment type="function">
    <text evidence="1">Couples transcription and DNA repair by recognizing RNA polymerase (RNAP) stalled at DNA lesions. Mediates ATP-dependent release of RNAP and its truncated transcript from the DNA, and recruitment of nucleotide excision repair machinery to the damaged site.</text>
</comment>
<comment type="subcellular location">
    <subcellularLocation>
        <location evidence="1">Cytoplasm</location>
    </subcellularLocation>
</comment>
<comment type="similarity">
    <text evidence="1">In the N-terminal section; belongs to the UvrB family.</text>
</comment>
<comment type="similarity">
    <text evidence="1">In the C-terminal section; belongs to the helicase family. RecG subfamily.</text>
</comment>
<proteinExistence type="inferred from homology"/>